<name>DAPA_PSYWF</name>
<organism>
    <name type="scientific">Psychrobacter sp. (strain PRwf-1)</name>
    <dbReference type="NCBI Taxonomy" id="349106"/>
    <lineage>
        <taxon>Bacteria</taxon>
        <taxon>Pseudomonadati</taxon>
        <taxon>Pseudomonadota</taxon>
        <taxon>Gammaproteobacteria</taxon>
        <taxon>Moraxellales</taxon>
        <taxon>Moraxellaceae</taxon>
        <taxon>Psychrobacter</taxon>
    </lineage>
</organism>
<gene>
    <name evidence="1" type="primary">dapA</name>
    <name type="ordered locus">PsycPRwf_2124</name>
</gene>
<dbReference type="EC" id="4.3.3.7" evidence="1"/>
<dbReference type="EMBL" id="CP000713">
    <property type="protein sequence ID" value="ABQ95064.1"/>
    <property type="molecule type" value="Genomic_DNA"/>
</dbReference>
<dbReference type="SMR" id="A5WHC3"/>
<dbReference type="STRING" id="349106.PsycPRwf_2124"/>
<dbReference type="KEGG" id="prw:PsycPRwf_2124"/>
<dbReference type="eggNOG" id="COG0329">
    <property type="taxonomic scope" value="Bacteria"/>
</dbReference>
<dbReference type="HOGENOM" id="CLU_049343_7_1_6"/>
<dbReference type="UniPathway" id="UPA00034">
    <property type="reaction ID" value="UER00017"/>
</dbReference>
<dbReference type="GO" id="GO:0005829">
    <property type="term" value="C:cytosol"/>
    <property type="evidence" value="ECO:0007669"/>
    <property type="project" value="TreeGrafter"/>
</dbReference>
<dbReference type="GO" id="GO:0008840">
    <property type="term" value="F:4-hydroxy-tetrahydrodipicolinate synthase activity"/>
    <property type="evidence" value="ECO:0007669"/>
    <property type="project" value="UniProtKB-UniRule"/>
</dbReference>
<dbReference type="GO" id="GO:0019877">
    <property type="term" value="P:diaminopimelate biosynthetic process"/>
    <property type="evidence" value="ECO:0007669"/>
    <property type="project" value="UniProtKB-UniRule"/>
</dbReference>
<dbReference type="GO" id="GO:0009089">
    <property type="term" value="P:lysine biosynthetic process via diaminopimelate"/>
    <property type="evidence" value="ECO:0007669"/>
    <property type="project" value="UniProtKB-UniRule"/>
</dbReference>
<dbReference type="CDD" id="cd00950">
    <property type="entry name" value="DHDPS"/>
    <property type="match status" value="1"/>
</dbReference>
<dbReference type="Gene3D" id="3.20.20.70">
    <property type="entry name" value="Aldolase class I"/>
    <property type="match status" value="1"/>
</dbReference>
<dbReference type="HAMAP" id="MF_00418">
    <property type="entry name" value="DapA"/>
    <property type="match status" value="1"/>
</dbReference>
<dbReference type="InterPro" id="IPR013785">
    <property type="entry name" value="Aldolase_TIM"/>
</dbReference>
<dbReference type="InterPro" id="IPR005263">
    <property type="entry name" value="DapA"/>
</dbReference>
<dbReference type="InterPro" id="IPR002220">
    <property type="entry name" value="DapA-like"/>
</dbReference>
<dbReference type="InterPro" id="IPR020625">
    <property type="entry name" value="Schiff_base-form_aldolases_AS"/>
</dbReference>
<dbReference type="NCBIfam" id="TIGR00674">
    <property type="entry name" value="dapA"/>
    <property type="match status" value="1"/>
</dbReference>
<dbReference type="PANTHER" id="PTHR12128:SF66">
    <property type="entry name" value="4-HYDROXY-2-OXOGLUTARATE ALDOLASE, MITOCHONDRIAL"/>
    <property type="match status" value="1"/>
</dbReference>
<dbReference type="PANTHER" id="PTHR12128">
    <property type="entry name" value="DIHYDRODIPICOLINATE SYNTHASE"/>
    <property type="match status" value="1"/>
</dbReference>
<dbReference type="Pfam" id="PF00701">
    <property type="entry name" value="DHDPS"/>
    <property type="match status" value="1"/>
</dbReference>
<dbReference type="PIRSF" id="PIRSF001365">
    <property type="entry name" value="DHDPS"/>
    <property type="match status" value="1"/>
</dbReference>
<dbReference type="PRINTS" id="PR00146">
    <property type="entry name" value="DHPICSNTHASE"/>
</dbReference>
<dbReference type="SMART" id="SM01130">
    <property type="entry name" value="DHDPS"/>
    <property type="match status" value="1"/>
</dbReference>
<dbReference type="SUPFAM" id="SSF51569">
    <property type="entry name" value="Aldolase"/>
    <property type="match status" value="1"/>
</dbReference>
<dbReference type="PROSITE" id="PS00666">
    <property type="entry name" value="DHDPS_2"/>
    <property type="match status" value="1"/>
</dbReference>
<feature type="chain" id="PRO_0000340982" description="4-hydroxy-tetrahydrodipicolinate synthase">
    <location>
        <begin position="1"/>
        <end position="302"/>
    </location>
</feature>
<feature type="active site" description="Proton donor/acceptor" evidence="1">
    <location>
        <position position="143"/>
    </location>
</feature>
<feature type="active site" description="Schiff-base intermediate with substrate" evidence="1">
    <location>
        <position position="171"/>
    </location>
</feature>
<feature type="binding site" evidence="1">
    <location>
        <position position="55"/>
    </location>
    <ligand>
        <name>pyruvate</name>
        <dbReference type="ChEBI" id="CHEBI:15361"/>
    </ligand>
</feature>
<feature type="binding site" evidence="1">
    <location>
        <position position="213"/>
    </location>
    <ligand>
        <name>pyruvate</name>
        <dbReference type="ChEBI" id="CHEBI:15361"/>
    </ligand>
</feature>
<feature type="site" description="Part of a proton relay during catalysis" evidence="1">
    <location>
        <position position="54"/>
    </location>
</feature>
<feature type="site" description="Part of a proton relay during catalysis" evidence="1">
    <location>
        <position position="117"/>
    </location>
</feature>
<sequence length="302" mass="32772">MSNRYSDFKTQLQGSMVALVTPMKANGEVDYPRLADLIDWQIEQGTHCLVAVGTTGESATLSMQEHSDVIHFFVKHVNGRVPVIAGTGANNTQEAIHLTSEAKAAGADCALLVAPYYNKPTQEGLYQHYKAISEAVDMPQMLYNVPGRTVVDIAQETVERLADFDNIVAIKDATGSVERGKLLIDALGDRIVVLSGDDGTALELMKHGAKGNISVTANIVPKAMSDVFSAALKGDFETAKKVHDSIEPLHKLMFVESSPIPVKYALNKMGKIEKGIRLPMVWLNEKFHDQVDAGLRAAGLID</sequence>
<reference key="1">
    <citation type="submission" date="2007-05" db="EMBL/GenBank/DDBJ databases">
        <title>Complete sequence of chromosome of Psychrobacter sp. PRwf-1.</title>
        <authorList>
            <consortium name="US DOE Joint Genome Institute"/>
            <person name="Copeland A."/>
            <person name="Lucas S."/>
            <person name="Lapidus A."/>
            <person name="Barry K."/>
            <person name="Detter J.C."/>
            <person name="Glavina del Rio T."/>
            <person name="Hammon N."/>
            <person name="Israni S."/>
            <person name="Dalin E."/>
            <person name="Tice H."/>
            <person name="Pitluck S."/>
            <person name="Chain P."/>
            <person name="Malfatti S."/>
            <person name="Shin M."/>
            <person name="Vergez L."/>
            <person name="Schmutz J."/>
            <person name="Larimer F."/>
            <person name="Land M."/>
            <person name="Hauser L."/>
            <person name="Kyrpides N."/>
            <person name="Kim E."/>
            <person name="Tiedje J."/>
            <person name="Richardson P."/>
        </authorList>
    </citation>
    <scope>NUCLEOTIDE SEQUENCE [LARGE SCALE GENOMIC DNA]</scope>
    <source>
        <strain>PRwf-1</strain>
    </source>
</reference>
<protein>
    <recommendedName>
        <fullName evidence="1">4-hydroxy-tetrahydrodipicolinate synthase</fullName>
        <shortName evidence="1">HTPA synthase</shortName>
        <ecNumber evidence="1">4.3.3.7</ecNumber>
    </recommendedName>
</protein>
<proteinExistence type="inferred from homology"/>
<comment type="function">
    <text evidence="1">Catalyzes the condensation of (S)-aspartate-beta-semialdehyde [(S)-ASA] and pyruvate to 4-hydroxy-tetrahydrodipicolinate (HTPA).</text>
</comment>
<comment type="catalytic activity">
    <reaction evidence="1">
        <text>L-aspartate 4-semialdehyde + pyruvate = (2S,4S)-4-hydroxy-2,3,4,5-tetrahydrodipicolinate + H2O + H(+)</text>
        <dbReference type="Rhea" id="RHEA:34171"/>
        <dbReference type="ChEBI" id="CHEBI:15361"/>
        <dbReference type="ChEBI" id="CHEBI:15377"/>
        <dbReference type="ChEBI" id="CHEBI:15378"/>
        <dbReference type="ChEBI" id="CHEBI:67139"/>
        <dbReference type="ChEBI" id="CHEBI:537519"/>
        <dbReference type="EC" id="4.3.3.7"/>
    </reaction>
</comment>
<comment type="pathway">
    <text evidence="1">Amino-acid biosynthesis; L-lysine biosynthesis via DAP pathway; (S)-tetrahydrodipicolinate from L-aspartate: step 3/4.</text>
</comment>
<comment type="subunit">
    <text evidence="1">Homotetramer; dimer of dimers.</text>
</comment>
<comment type="subcellular location">
    <subcellularLocation>
        <location evidence="1">Cytoplasm</location>
    </subcellularLocation>
</comment>
<comment type="similarity">
    <text evidence="1">Belongs to the DapA family.</text>
</comment>
<comment type="caution">
    <text evidence="2">Was originally thought to be a dihydrodipicolinate synthase (DHDPS), catalyzing the condensation of (S)-aspartate-beta-semialdehyde [(S)-ASA] and pyruvate to dihydrodipicolinate (DHDP). However, it was shown in E.coli that the product of the enzymatic reaction is not dihydrodipicolinate but in fact (4S)-4-hydroxy-2,3,4,5-tetrahydro-(2S)-dipicolinic acid (HTPA), and that the consecutive dehydration reaction leading to DHDP is not spontaneous but catalyzed by DapB.</text>
</comment>
<evidence type="ECO:0000255" key="1">
    <source>
        <dbReference type="HAMAP-Rule" id="MF_00418"/>
    </source>
</evidence>
<evidence type="ECO:0000305" key="2"/>
<accession>A5WHC3</accession>
<keyword id="KW-0028">Amino-acid biosynthesis</keyword>
<keyword id="KW-0963">Cytoplasm</keyword>
<keyword id="KW-0220">Diaminopimelate biosynthesis</keyword>
<keyword id="KW-0456">Lyase</keyword>
<keyword id="KW-0457">Lysine biosynthesis</keyword>
<keyword id="KW-0704">Schiff base</keyword>